<feature type="chain" id="PRO_1000082146" description="Succinate--CoA ligase [ADP-forming] subunit beta">
    <location>
        <begin position="1"/>
        <end position="399"/>
    </location>
</feature>
<feature type="domain" description="ATP-grasp" evidence="1">
    <location>
        <begin position="9"/>
        <end position="254"/>
    </location>
</feature>
<feature type="binding site" evidence="1">
    <location>
        <position position="46"/>
    </location>
    <ligand>
        <name>ATP</name>
        <dbReference type="ChEBI" id="CHEBI:30616"/>
    </ligand>
</feature>
<feature type="binding site" evidence="1">
    <location>
        <begin position="53"/>
        <end position="55"/>
    </location>
    <ligand>
        <name>ATP</name>
        <dbReference type="ChEBI" id="CHEBI:30616"/>
    </ligand>
</feature>
<feature type="binding site" evidence="1">
    <location>
        <position position="112"/>
    </location>
    <ligand>
        <name>ATP</name>
        <dbReference type="ChEBI" id="CHEBI:30616"/>
    </ligand>
</feature>
<feature type="binding site" evidence="1">
    <location>
        <position position="117"/>
    </location>
    <ligand>
        <name>ATP</name>
        <dbReference type="ChEBI" id="CHEBI:30616"/>
    </ligand>
</feature>
<feature type="binding site" evidence="1">
    <location>
        <position position="209"/>
    </location>
    <ligand>
        <name>Mg(2+)</name>
        <dbReference type="ChEBI" id="CHEBI:18420"/>
    </ligand>
</feature>
<feature type="binding site" evidence="1">
    <location>
        <position position="223"/>
    </location>
    <ligand>
        <name>Mg(2+)</name>
        <dbReference type="ChEBI" id="CHEBI:18420"/>
    </ligand>
</feature>
<feature type="binding site" evidence="1">
    <location>
        <position position="274"/>
    </location>
    <ligand>
        <name>substrate</name>
        <note>ligand shared with subunit alpha</note>
    </ligand>
</feature>
<feature type="binding site" evidence="1">
    <location>
        <begin position="331"/>
        <end position="333"/>
    </location>
    <ligand>
        <name>substrate</name>
        <note>ligand shared with subunit alpha</note>
    </ligand>
</feature>
<comment type="function">
    <text evidence="1">Succinyl-CoA synthetase functions in the citric acid cycle (TCA), coupling the hydrolysis of succinyl-CoA to the synthesis of either ATP or GTP and thus represents the only step of substrate-level phosphorylation in the TCA. The beta subunit provides nucleotide specificity of the enzyme and binds the substrate succinate, while the binding sites for coenzyme A and phosphate are found in the alpha subunit.</text>
</comment>
<comment type="catalytic activity">
    <reaction evidence="1">
        <text>succinate + ATP + CoA = succinyl-CoA + ADP + phosphate</text>
        <dbReference type="Rhea" id="RHEA:17661"/>
        <dbReference type="ChEBI" id="CHEBI:30031"/>
        <dbReference type="ChEBI" id="CHEBI:30616"/>
        <dbReference type="ChEBI" id="CHEBI:43474"/>
        <dbReference type="ChEBI" id="CHEBI:57287"/>
        <dbReference type="ChEBI" id="CHEBI:57292"/>
        <dbReference type="ChEBI" id="CHEBI:456216"/>
        <dbReference type="EC" id="6.2.1.5"/>
    </reaction>
    <physiologicalReaction direction="right-to-left" evidence="1">
        <dbReference type="Rhea" id="RHEA:17663"/>
    </physiologicalReaction>
</comment>
<comment type="catalytic activity">
    <reaction evidence="1">
        <text>GTP + succinate + CoA = succinyl-CoA + GDP + phosphate</text>
        <dbReference type="Rhea" id="RHEA:22120"/>
        <dbReference type="ChEBI" id="CHEBI:30031"/>
        <dbReference type="ChEBI" id="CHEBI:37565"/>
        <dbReference type="ChEBI" id="CHEBI:43474"/>
        <dbReference type="ChEBI" id="CHEBI:57287"/>
        <dbReference type="ChEBI" id="CHEBI:57292"/>
        <dbReference type="ChEBI" id="CHEBI:58189"/>
    </reaction>
    <physiologicalReaction direction="right-to-left" evidence="1">
        <dbReference type="Rhea" id="RHEA:22122"/>
    </physiologicalReaction>
</comment>
<comment type="cofactor">
    <cofactor evidence="1">
        <name>Mg(2+)</name>
        <dbReference type="ChEBI" id="CHEBI:18420"/>
    </cofactor>
    <text evidence="1">Binds 1 Mg(2+) ion per subunit.</text>
</comment>
<comment type="pathway">
    <text evidence="1">Carbohydrate metabolism; tricarboxylic acid cycle; succinate from succinyl-CoA (ligase route): step 1/1.</text>
</comment>
<comment type="subunit">
    <text evidence="1">Heterotetramer of two alpha and two beta subunits.</text>
</comment>
<comment type="similarity">
    <text evidence="1">Belongs to the succinate/malate CoA ligase beta subunit family.</text>
</comment>
<reference key="1">
    <citation type="submission" date="2006-01" db="EMBL/GenBank/DDBJ databases">
        <title>Complete sequence of Novosphingobium aromaticivorans DSM 12444.</title>
        <authorList>
            <consortium name="US DOE Joint Genome Institute"/>
            <person name="Copeland A."/>
            <person name="Lucas S."/>
            <person name="Lapidus A."/>
            <person name="Barry K."/>
            <person name="Detter J.C."/>
            <person name="Glavina T."/>
            <person name="Hammon N."/>
            <person name="Israni S."/>
            <person name="Pitluck S."/>
            <person name="Chain P."/>
            <person name="Malfatti S."/>
            <person name="Shin M."/>
            <person name="Vergez L."/>
            <person name="Schmutz J."/>
            <person name="Larimer F."/>
            <person name="Land M."/>
            <person name="Kyrpides N."/>
            <person name="Ivanova N."/>
            <person name="Fredrickson J."/>
            <person name="Balkwill D."/>
            <person name="Romine M.F."/>
            <person name="Richardson P."/>
        </authorList>
    </citation>
    <scope>NUCLEOTIDE SEQUENCE [LARGE SCALE GENOMIC DNA]</scope>
    <source>
        <strain>ATCC 700278 / DSM 12444 / CCUG 56034 / CIP 105152 / NBRC 16084 / F199</strain>
    </source>
</reference>
<dbReference type="EC" id="6.2.1.5" evidence="1"/>
<dbReference type="EMBL" id="CP000248">
    <property type="protein sequence ID" value="ABD27605.1"/>
    <property type="molecule type" value="Genomic_DNA"/>
</dbReference>
<dbReference type="RefSeq" id="WP_011446807.1">
    <property type="nucleotide sequence ID" value="NC_007794.1"/>
</dbReference>
<dbReference type="SMR" id="Q2G3G8"/>
<dbReference type="STRING" id="279238.Saro_3170"/>
<dbReference type="KEGG" id="nar:Saro_3170"/>
<dbReference type="eggNOG" id="COG0045">
    <property type="taxonomic scope" value="Bacteria"/>
</dbReference>
<dbReference type="HOGENOM" id="CLU_037430_0_2_5"/>
<dbReference type="UniPathway" id="UPA00223">
    <property type="reaction ID" value="UER00999"/>
</dbReference>
<dbReference type="Proteomes" id="UP000009134">
    <property type="component" value="Chromosome"/>
</dbReference>
<dbReference type="GO" id="GO:0005829">
    <property type="term" value="C:cytosol"/>
    <property type="evidence" value="ECO:0007669"/>
    <property type="project" value="TreeGrafter"/>
</dbReference>
<dbReference type="GO" id="GO:0042709">
    <property type="term" value="C:succinate-CoA ligase complex"/>
    <property type="evidence" value="ECO:0007669"/>
    <property type="project" value="TreeGrafter"/>
</dbReference>
<dbReference type="GO" id="GO:0005524">
    <property type="term" value="F:ATP binding"/>
    <property type="evidence" value="ECO:0007669"/>
    <property type="project" value="UniProtKB-UniRule"/>
</dbReference>
<dbReference type="GO" id="GO:0000287">
    <property type="term" value="F:magnesium ion binding"/>
    <property type="evidence" value="ECO:0007669"/>
    <property type="project" value="UniProtKB-UniRule"/>
</dbReference>
<dbReference type="GO" id="GO:0004775">
    <property type="term" value="F:succinate-CoA ligase (ADP-forming) activity"/>
    <property type="evidence" value="ECO:0007669"/>
    <property type="project" value="UniProtKB-UniRule"/>
</dbReference>
<dbReference type="GO" id="GO:0004776">
    <property type="term" value="F:succinate-CoA ligase (GDP-forming) activity"/>
    <property type="evidence" value="ECO:0007669"/>
    <property type="project" value="RHEA"/>
</dbReference>
<dbReference type="GO" id="GO:0006104">
    <property type="term" value="P:succinyl-CoA metabolic process"/>
    <property type="evidence" value="ECO:0007669"/>
    <property type="project" value="TreeGrafter"/>
</dbReference>
<dbReference type="GO" id="GO:0006099">
    <property type="term" value="P:tricarboxylic acid cycle"/>
    <property type="evidence" value="ECO:0007669"/>
    <property type="project" value="UniProtKB-UniRule"/>
</dbReference>
<dbReference type="FunFam" id="3.30.1490.20:FF:000002">
    <property type="entry name" value="Succinate--CoA ligase [ADP-forming] subunit beta"/>
    <property type="match status" value="1"/>
</dbReference>
<dbReference type="FunFam" id="3.30.470.20:FF:000002">
    <property type="entry name" value="Succinate--CoA ligase [ADP-forming] subunit beta"/>
    <property type="match status" value="1"/>
</dbReference>
<dbReference type="FunFam" id="3.40.50.261:FF:000001">
    <property type="entry name" value="Succinate--CoA ligase [ADP-forming] subunit beta"/>
    <property type="match status" value="1"/>
</dbReference>
<dbReference type="Gene3D" id="3.30.1490.20">
    <property type="entry name" value="ATP-grasp fold, A domain"/>
    <property type="match status" value="1"/>
</dbReference>
<dbReference type="Gene3D" id="3.30.470.20">
    <property type="entry name" value="ATP-grasp fold, B domain"/>
    <property type="match status" value="1"/>
</dbReference>
<dbReference type="Gene3D" id="3.40.50.261">
    <property type="entry name" value="Succinyl-CoA synthetase domains"/>
    <property type="match status" value="1"/>
</dbReference>
<dbReference type="HAMAP" id="MF_00558">
    <property type="entry name" value="Succ_CoA_beta"/>
    <property type="match status" value="1"/>
</dbReference>
<dbReference type="InterPro" id="IPR011761">
    <property type="entry name" value="ATP-grasp"/>
</dbReference>
<dbReference type="InterPro" id="IPR013650">
    <property type="entry name" value="ATP-grasp_succ-CoA_synth-type"/>
</dbReference>
<dbReference type="InterPro" id="IPR013815">
    <property type="entry name" value="ATP_grasp_subdomain_1"/>
</dbReference>
<dbReference type="InterPro" id="IPR017866">
    <property type="entry name" value="Succ-CoA_synthase_bsu_CS"/>
</dbReference>
<dbReference type="InterPro" id="IPR005811">
    <property type="entry name" value="SUCC_ACL_C"/>
</dbReference>
<dbReference type="InterPro" id="IPR005809">
    <property type="entry name" value="Succ_CoA_ligase-like_bsu"/>
</dbReference>
<dbReference type="InterPro" id="IPR016102">
    <property type="entry name" value="Succinyl-CoA_synth-like"/>
</dbReference>
<dbReference type="NCBIfam" id="NF001913">
    <property type="entry name" value="PRK00696.1"/>
    <property type="match status" value="1"/>
</dbReference>
<dbReference type="NCBIfam" id="TIGR01016">
    <property type="entry name" value="sucCoAbeta"/>
    <property type="match status" value="1"/>
</dbReference>
<dbReference type="PANTHER" id="PTHR11815:SF10">
    <property type="entry name" value="SUCCINATE--COA LIGASE [GDP-FORMING] SUBUNIT BETA, MITOCHONDRIAL"/>
    <property type="match status" value="1"/>
</dbReference>
<dbReference type="PANTHER" id="PTHR11815">
    <property type="entry name" value="SUCCINYL-COA SYNTHETASE BETA CHAIN"/>
    <property type="match status" value="1"/>
</dbReference>
<dbReference type="Pfam" id="PF08442">
    <property type="entry name" value="ATP-grasp_2"/>
    <property type="match status" value="1"/>
</dbReference>
<dbReference type="Pfam" id="PF00549">
    <property type="entry name" value="Ligase_CoA"/>
    <property type="match status" value="1"/>
</dbReference>
<dbReference type="PIRSF" id="PIRSF001554">
    <property type="entry name" value="SucCS_beta"/>
    <property type="match status" value="1"/>
</dbReference>
<dbReference type="SUPFAM" id="SSF56059">
    <property type="entry name" value="Glutathione synthetase ATP-binding domain-like"/>
    <property type="match status" value="1"/>
</dbReference>
<dbReference type="SUPFAM" id="SSF52210">
    <property type="entry name" value="Succinyl-CoA synthetase domains"/>
    <property type="match status" value="1"/>
</dbReference>
<dbReference type="PROSITE" id="PS50975">
    <property type="entry name" value="ATP_GRASP"/>
    <property type="match status" value="1"/>
</dbReference>
<dbReference type="PROSITE" id="PS01217">
    <property type="entry name" value="SUCCINYL_COA_LIG_3"/>
    <property type="match status" value="1"/>
</dbReference>
<keyword id="KW-0067">ATP-binding</keyword>
<keyword id="KW-0436">Ligase</keyword>
<keyword id="KW-0460">Magnesium</keyword>
<keyword id="KW-0479">Metal-binding</keyword>
<keyword id="KW-0547">Nucleotide-binding</keyword>
<keyword id="KW-1185">Reference proteome</keyword>
<keyword id="KW-0816">Tricarboxylic acid cycle</keyword>
<protein>
    <recommendedName>
        <fullName evidence="1">Succinate--CoA ligase [ADP-forming] subunit beta</fullName>
        <ecNumber evidence="1">6.2.1.5</ecNumber>
    </recommendedName>
    <alternativeName>
        <fullName evidence="1">Succinyl-CoA synthetase subunit beta</fullName>
        <shortName evidence="1">SCS-beta</shortName>
    </alternativeName>
</protein>
<gene>
    <name evidence="1" type="primary">sucC</name>
    <name type="ordered locus">Saro_3170</name>
</gene>
<organism>
    <name type="scientific">Novosphingobium aromaticivorans (strain ATCC 700278 / DSM 12444 / CCUG 56034 / CIP 105152 / NBRC 16084 / F199)</name>
    <dbReference type="NCBI Taxonomy" id="279238"/>
    <lineage>
        <taxon>Bacteria</taxon>
        <taxon>Pseudomonadati</taxon>
        <taxon>Pseudomonadota</taxon>
        <taxon>Alphaproteobacteria</taxon>
        <taxon>Sphingomonadales</taxon>
        <taxon>Sphingomonadaceae</taxon>
        <taxon>Novosphingobium</taxon>
    </lineage>
</organism>
<name>SUCC_NOVAD</name>
<sequence>MNVHEYQAKELLAKYGVGIPAGIAALTVEEAVAAAKQLPGPLYVVKAQIHAGGRGKGKFKELPADAKGGVRLAKSIEEVEAFAKEMLGNTLVTVQTGEAGKQVNRLYVTDGVDIDKEYYLSMVVDRATGRVAIIVSTEGGMDIEEVAHSTPEKIATIVIDPAEGFMPHHGRAVGFALKLSGDLLKQAAKIAEQLYTAFVALDCSMLEINPLVQTKDGNLLVLDTKMSFDSNALYRHPDVVALRDETEEDPAEIEASKYDLAYIKLDGNIGCMVNGAGLAMATMDIIKLNGEFPANFLDVGGGANKEKVTAAFKIILKDPAVKGILVNIFGGIMKCDIIAEGIVAAAKEVNLSVPLVVRLEGTNVQQGKDILANSGLPIVPANDLGDAAKKIVAEVRAVA</sequence>
<proteinExistence type="inferred from homology"/>
<accession>Q2G3G8</accession>
<evidence type="ECO:0000255" key="1">
    <source>
        <dbReference type="HAMAP-Rule" id="MF_00558"/>
    </source>
</evidence>